<comment type="function">
    <text evidence="1">Casein kinases are operationally defined by their preferential utilization of acidic proteins such as caseins as substrates. Central component of the circadian clock. May act as a negative regulator of circadian rhythmicity by phosphorylating per1 and per2, which may lead to their degradation. Participates in wnt signaling (By similarity).</text>
</comment>
<comment type="catalytic activity">
    <reaction>
        <text>L-seryl-[protein] + ATP = O-phospho-L-seryl-[protein] + ADP + H(+)</text>
        <dbReference type="Rhea" id="RHEA:17989"/>
        <dbReference type="Rhea" id="RHEA-COMP:9863"/>
        <dbReference type="Rhea" id="RHEA-COMP:11604"/>
        <dbReference type="ChEBI" id="CHEBI:15378"/>
        <dbReference type="ChEBI" id="CHEBI:29999"/>
        <dbReference type="ChEBI" id="CHEBI:30616"/>
        <dbReference type="ChEBI" id="CHEBI:83421"/>
        <dbReference type="ChEBI" id="CHEBI:456216"/>
        <dbReference type="EC" id="2.7.11.1"/>
    </reaction>
</comment>
<comment type="catalytic activity">
    <reaction>
        <text>L-threonyl-[protein] + ATP = O-phospho-L-threonyl-[protein] + ADP + H(+)</text>
        <dbReference type="Rhea" id="RHEA:46608"/>
        <dbReference type="Rhea" id="RHEA-COMP:11060"/>
        <dbReference type="Rhea" id="RHEA-COMP:11605"/>
        <dbReference type="ChEBI" id="CHEBI:15378"/>
        <dbReference type="ChEBI" id="CHEBI:30013"/>
        <dbReference type="ChEBI" id="CHEBI:30616"/>
        <dbReference type="ChEBI" id="CHEBI:61977"/>
        <dbReference type="ChEBI" id="CHEBI:456216"/>
        <dbReference type="EC" id="2.7.11.1"/>
    </reaction>
</comment>
<comment type="activity regulation">
    <text evidence="1">Exhibits substrate-dependent heparin activation.</text>
</comment>
<comment type="subunit">
    <text evidence="1">Monomer (By similarity). Interacts with per1 and per2. Component of the circadian core oscillator (By similarity).</text>
</comment>
<comment type="subcellular location">
    <subcellularLocation>
        <location evidence="1">Cytoplasm</location>
    </subcellularLocation>
    <subcellularLocation>
        <location evidence="1">Nucleus</location>
    </subcellularLocation>
</comment>
<comment type="developmental stage">
    <text evidence="5">Ubiquitously expressed in embryos until eight hours after fertilization. Detected throughout the embryo, but particularly in the cephalic region, at 10 to 24 hours after fertilization. Detected in retina, tegmentum and myencephalon at 38 and 48 hours after fertilization.</text>
</comment>
<comment type="PTM">
    <text evidence="1">Autophosphorylated on serine and threonine residues.</text>
</comment>
<comment type="similarity">
    <text evidence="6">Belongs to the protein kinase superfamily.</text>
</comment>
<evidence type="ECO:0000250" key="1"/>
<evidence type="ECO:0000255" key="2">
    <source>
        <dbReference type="PROSITE-ProRule" id="PRU00159"/>
    </source>
</evidence>
<evidence type="ECO:0000255" key="3">
    <source>
        <dbReference type="PROSITE-ProRule" id="PRU10027"/>
    </source>
</evidence>
<evidence type="ECO:0000256" key="4">
    <source>
        <dbReference type="SAM" id="MobiDB-lite"/>
    </source>
</evidence>
<evidence type="ECO:0000269" key="5">
    <source>
    </source>
</evidence>
<evidence type="ECO:0000305" key="6"/>
<gene>
    <name type="primary">csnk1da</name>
    <name type="synonym">csnk1dl</name>
    <name type="ORF">si:ch211-234h8.6</name>
</gene>
<keyword id="KW-0067">ATP-binding</keyword>
<keyword id="KW-0963">Cytoplasm</keyword>
<keyword id="KW-0418">Kinase</keyword>
<keyword id="KW-0547">Nucleotide-binding</keyword>
<keyword id="KW-0539">Nucleus</keyword>
<keyword id="KW-1185">Reference proteome</keyword>
<keyword id="KW-0723">Serine/threonine-protein kinase</keyword>
<keyword id="KW-0808">Transferase</keyword>
<keyword id="KW-0879">Wnt signaling pathway</keyword>
<protein>
    <recommendedName>
        <fullName>Casein kinase I isoform delta-A</fullName>
        <shortName>CKI-delta-A</shortName>
        <shortName>CKId-A</shortName>
        <ecNumber>2.7.11.1</ecNumber>
    </recommendedName>
    <alternativeName>
        <fullName>Casein kinase I isoform delta-like</fullName>
    </alternativeName>
</protein>
<proteinExistence type="evidence at transcript level"/>
<name>KC1DA_DANRE</name>
<dbReference type="EC" id="2.7.11.1"/>
<dbReference type="EMBL" id="EU127826">
    <property type="protein sequence ID" value="ABV29338.1"/>
    <property type="molecule type" value="mRNA"/>
</dbReference>
<dbReference type="EMBL" id="BX897685">
    <property type="protein sequence ID" value="CAQ15428.1"/>
    <property type="molecule type" value="Genomic_DNA"/>
</dbReference>
<dbReference type="EMBL" id="BC054583">
    <property type="protein sequence ID" value="AAH54583.1"/>
    <property type="molecule type" value="mRNA"/>
</dbReference>
<dbReference type="RefSeq" id="NP_955877.1">
    <property type="nucleotide sequence ID" value="NM_199583.1"/>
</dbReference>
<dbReference type="SMR" id="Q7T2E3"/>
<dbReference type="FunCoup" id="Q7T2E3">
    <property type="interactions" value="1856"/>
</dbReference>
<dbReference type="STRING" id="7955.ENSDARP00000003101"/>
<dbReference type="PaxDb" id="7955-ENSDARP00000003101"/>
<dbReference type="Ensembl" id="ENSDART00000025326">
    <property type="protein sequence ID" value="ENSDARP00000003101"/>
    <property type="gene ID" value="ENSDARG00000008370"/>
</dbReference>
<dbReference type="GeneID" id="322106"/>
<dbReference type="KEGG" id="dre:322106"/>
<dbReference type="AGR" id="ZFIN:ZDB-GENE-030131-825"/>
<dbReference type="CTD" id="322106"/>
<dbReference type="ZFIN" id="ZDB-GENE-030131-825">
    <property type="gene designation" value="csnk1da"/>
</dbReference>
<dbReference type="eggNOG" id="KOG1164">
    <property type="taxonomic scope" value="Eukaryota"/>
</dbReference>
<dbReference type="HOGENOM" id="CLU_019279_2_2_1"/>
<dbReference type="InParanoid" id="Q7T2E3"/>
<dbReference type="OMA" id="DAMYMGQ"/>
<dbReference type="OrthoDB" id="5800476at2759"/>
<dbReference type="PhylomeDB" id="Q7T2E3"/>
<dbReference type="TreeFam" id="TF354246"/>
<dbReference type="PRO" id="PR:Q7T2E3"/>
<dbReference type="Proteomes" id="UP000000437">
    <property type="component" value="Chromosome 3"/>
</dbReference>
<dbReference type="Bgee" id="ENSDARG00000008370">
    <property type="expression patterns" value="Expressed in mature ovarian follicle and 30 other cell types or tissues"/>
</dbReference>
<dbReference type="ExpressionAtlas" id="Q7T2E3">
    <property type="expression patterns" value="baseline and differential"/>
</dbReference>
<dbReference type="GO" id="GO:0005737">
    <property type="term" value="C:cytoplasm"/>
    <property type="evidence" value="ECO:0000318"/>
    <property type="project" value="GO_Central"/>
</dbReference>
<dbReference type="GO" id="GO:0005634">
    <property type="term" value="C:nucleus"/>
    <property type="evidence" value="ECO:0000318"/>
    <property type="project" value="GO_Central"/>
</dbReference>
<dbReference type="GO" id="GO:0005876">
    <property type="term" value="C:spindle microtubule"/>
    <property type="evidence" value="ECO:0000318"/>
    <property type="project" value="GO_Central"/>
</dbReference>
<dbReference type="GO" id="GO:0005524">
    <property type="term" value="F:ATP binding"/>
    <property type="evidence" value="ECO:0007669"/>
    <property type="project" value="UniProtKB-KW"/>
</dbReference>
<dbReference type="GO" id="GO:0106310">
    <property type="term" value="F:protein serine kinase activity"/>
    <property type="evidence" value="ECO:0007669"/>
    <property type="project" value="RHEA"/>
</dbReference>
<dbReference type="GO" id="GO:0004674">
    <property type="term" value="F:protein serine/threonine kinase activity"/>
    <property type="evidence" value="ECO:0000318"/>
    <property type="project" value="GO_Central"/>
</dbReference>
<dbReference type="GO" id="GO:0006897">
    <property type="term" value="P:endocytosis"/>
    <property type="evidence" value="ECO:0000318"/>
    <property type="project" value="GO_Central"/>
</dbReference>
<dbReference type="GO" id="GO:1905515">
    <property type="term" value="P:non-motile cilium assembly"/>
    <property type="evidence" value="ECO:0000318"/>
    <property type="project" value="GO_Central"/>
</dbReference>
<dbReference type="GO" id="GO:0090263">
    <property type="term" value="P:positive regulation of canonical Wnt signaling pathway"/>
    <property type="evidence" value="ECO:0000318"/>
    <property type="project" value="GO_Central"/>
</dbReference>
<dbReference type="GO" id="GO:0032436">
    <property type="term" value="P:positive regulation of proteasomal ubiquitin-dependent protein catabolic process"/>
    <property type="evidence" value="ECO:0000318"/>
    <property type="project" value="GO_Central"/>
</dbReference>
<dbReference type="GO" id="GO:0042752">
    <property type="term" value="P:regulation of circadian rhythm"/>
    <property type="evidence" value="ECO:0000318"/>
    <property type="project" value="GO_Central"/>
</dbReference>
<dbReference type="GO" id="GO:0007165">
    <property type="term" value="P:signal transduction"/>
    <property type="evidence" value="ECO:0000318"/>
    <property type="project" value="GO_Central"/>
</dbReference>
<dbReference type="GO" id="GO:0051225">
    <property type="term" value="P:spindle assembly"/>
    <property type="evidence" value="ECO:0000318"/>
    <property type="project" value="GO_Central"/>
</dbReference>
<dbReference type="GO" id="GO:0016055">
    <property type="term" value="P:Wnt signaling pathway"/>
    <property type="evidence" value="ECO:0007669"/>
    <property type="project" value="UniProtKB-KW"/>
</dbReference>
<dbReference type="CDD" id="cd14125">
    <property type="entry name" value="STKc_CK1_delta_epsilon"/>
    <property type="match status" value="1"/>
</dbReference>
<dbReference type="FunFam" id="1.10.510.10:FF:000194">
    <property type="entry name" value="Casein kinase I isoform delta"/>
    <property type="match status" value="1"/>
</dbReference>
<dbReference type="FunFam" id="3.30.200.20:FF:000538">
    <property type="entry name" value="Putative Casein kinase I"/>
    <property type="match status" value="1"/>
</dbReference>
<dbReference type="Gene3D" id="1.10.510.10">
    <property type="entry name" value="Transferase(Phosphotransferase) domain 1"/>
    <property type="match status" value="1"/>
</dbReference>
<dbReference type="InterPro" id="IPR050235">
    <property type="entry name" value="CK1_Ser-Thr_kinase"/>
</dbReference>
<dbReference type="InterPro" id="IPR011009">
    <property type="entry name" value="Kinase-like_dom_sf"/>
</dbReference>
<dbReference type="InterPro" id="IPR000719">
    <property type="entry name" value="Prot_kinase_dom"/>
</dbReference>
<dbReference type="InterPro" id="IPR017441">
    <property type="entry name" value="Protein_kinase_ATP_BS"/>
</dbReference>
<dbReference type="InterPro" id="IPR008271">
    <property type="entry name" value="Ser/Thr_kinase_AS"/>
</dbReference>
<dbReference type="PANTHER" id="PTHR11909">
    <property type="entry name" value="CASEIN KINASE-RELATED"/>
    <property type="match status" value="1"/>
</dbReference>
<dbReference type="Pfam" id="PF00069">
    <property type="entry name" value="Pkinase"/>
    <property type="match status" value="1"/>
</dbReference>
<dbReference type="SMART" id="SM00220">
    <property type="entry name" value="S_TKc"/>
    <property type="match status" value="1"/>
</dbReference>
<dbReference type="SUPFAM" id="SSF56112">
    <property type="entry name" value="Protein kinase-like (PK-like)"/>
    <property type="match status" value="1"/>
</dbReference>
<dbReference type="PROSITE" id="PS00107">
    <property type="entry name" value="PROTEIN_KINASE_ATP"/>
    <property type="match status" value="1"/>
</dbReference>
<dbReference type="PROSITE" id="PS50011">
    <property type="entry name" value="PROTEIN_KINASE_DOM"/>
    <property type="match status" value="1"/>
</dbReference>
<dbReference type="PROSITE" id="PS00108">
    <property type="entry name" value="PROTEIN_KINASE_ST"/>
    <property type="match status" value="1"/>
</dbReference>
<organism>
    <name type="scientific">Danio rerio</name>
    <name type="common">Zebrafish</name>
    <name type="synonym">Brachydanio rerio</name>
    <dbReference type="NCBI Taxonomy" id="7955"/>
    <lineage>
        <taxon>Eukaryota</taxon>
        <taxon>Metazoa</taxon>
        <taxon>Chordata</taxon>
        <taxon>Craniata</taxon>
        <taxon>Vertebrata</taxon>
        <taxon>Euteleostomi</taxon>
        <taxon>Actinopterygii</taxon>
        <taxon>Neopterygii</taxon>
        <taxon>Teleostei</taxon>
        <taxon>Ostariophysi</taxon>
        <taxon>Cypriniformes</taxon>
        <taxon>Danionidae</taxon>
        <taxon>Danioninae</taxon>
        <taxon>Danio</taxon>
    </lineage>
</organism>
<reference key="1">
    <citation type="journal article" date="2007" name="Biol. Res.">
        <title>The CK1 gene family: expression patterning in zebrafish development.</title>
        <authorList>
            <person name="Albornoz A."/>
            <person name="Yanez J.M."/>
            <person name="Foerster C."/>
            <person name="Aguirre C."/>
            <person name="Pereiro L."/>
            <person name="Burzio V."/>
            <person name="Moraga M."/>
            <person name="Reyes A.E."/>
            <person name="Antonelli M."/>
        </authorList>
    </citation>
    <scope>NUCLEOTIDE SEQUENCE [MRNA]</scope>
    <scope>DEVELOPMENTAL STAGE</scope>
</reference>
<reference key="2">
    <citation type="journal article" date="2013" name="Nature">
        <title>The zebrafish reference genome sequence and its relationship to the human genome.</title>
        <authorList>
            <person name="Howe K."/>
            <person name="Clark M.D."/>
            <person name="Torroja C.F."/>
            <person name="Torrance J."/>
            <person name="Berthelot C."/>
            <person name="Muffato M."/>
            <person name="Collins J.E."/>
            <person name="Humphray S."/>
            <person name="McLaren K."/>
            <person name="Matthews L."/>
            <person name="McLaren S."/>
            <person name="Sealy I."/>
            <person name="Caccamo M."/>
            <person name="Churcher C."/>
            <person name="Scott C."/>
            <person name="Barrett J.C."/>
            <person name="Koch R."/>
            <person name="Rauch G.J."/>
            <person name="White S."/>
            <person name="Chow W."/>
            <person name="Kilian B."/>
            <person name="Quintais L.T."/>
            <person name="Guerra-Assuncao J.A."/>
            <person name="Zhou Y."/>
            <person name="Gu Y."/>
            <person name="Yen J."/>
            <person name="Vogel J.H."/>
            <person name="Eyre T."/>
            <person name="Redmond S."/>
            <person name="Banerjee R."/>
            <person name="Chi J."/>
            <person name="Fu B."/>
            <person name="Langley E."/>
            <person name="Maguire S.F."/>
            <person name="Laird G.K."/>
            <person name="Lloyd D."/>
            <person name="Kenyon E."/>
            <person name="Donaldson S."/>
            <person name="Sehra H."/>
            <person name="Almeida-King J."/>
            <person name="Loveland J."/>
            <person name="Trevanion S."/>
            <person name="Jones M."/>
            <person name="Quail M."/>
            <person name="Willey D."/>
            <person name="Hunt A."/>
            <person name="Burton J."/>
            <person name="Sims S."/>
            <person name="McLay K."/>
            <person name="Plumb B."/>
            <person name="Davis J."/>
            <person name="Clee C."/>
            <person name="Oliver K."/>
            <person name="Clark R."/>
            <person name="Riddle C."/>
            <person name="Elliot D."/>
            <person name="Threadgold G."/>
            <person name="Harden G."/>
            <person name="Ware D."/>
            <person name="Begum S."/>
            <person name="Mortimore B."/>
            <person name="Kerry G."/>
            <person name="Heath P."/>
            <person name="Phillimore B."/>
            <person name="Tracey A."/>
            <person name="Corby N."/>
            <person name="Dunn M."/>
            <person name="Johnson C."/>
            <person name="Wood J."/>
            <person name="Clark S."/>
            <person name="Pelan S."/>
            <person name="Griffiths G."/>
            <person name="Smith M."/>
            <person name="Glithero R."/>
            <person name="Howden P."/>
            <person name="Barker N."/>
            <person name="Lloyd C."/>
            <person name="Stevens C."/>
            <person name="Harley J."/>
            <person name="Holt K."/>
            <person name="Panagiotidis G."/>
            <person name="Lovell J."/>
            <person name="Beasley H."/>
            <person name="Henderson C."/>
            <person name="Gordon D."/>
            <person name="Auger K."/>
            <person name="Wright D."/>
            <person name="Collins J."/>
            <person name="Raisen C."/>
            <person name="Dyer L."/>
            <person name="Leung K."/>
            <person name="Robertson L."/>
            <person name="Ambridge K."/>
            <person name="Leongamornlert D."/>
            <person name="McGuire S."/>
            <person name="Gilderthorp R."/>
            <person name="Griffiths C."/>
            <person name="Manthravadi D."/>
            <person name="Nichol S."/>
            <person name="Barker G."/>
            <person name="Whitehead S."/>
            <person name="Kay M."/>
            <person name="Brown J."/>
            <person name="Murnane C."/>
            <person name="Gray E."/>
            <person name="Humphries M."/>
            <person name="Sycamore N."/>
            <person name="Barker D."/>
            <person name="Saunders D."/>
            <person name="Wallis J."/>
            <person name="Babbage A."/>
            <person name="Hammond S."/>
            <person name="Mashreghi-Mohammadi M."/>
            <person name="Barr L."/>
            <person name="Martin S."/>
            <person name="Wray P."/>
            <person name="Ellington A."/>
            <person name="Matthews N."/>
            <person name="Ellwood M."/>
            <person name="Woodmansey R."/>
            <person name="Clark G."/>
            <person name="Cooper J."/>
            <person name="Tromans A."/>
            <person name="Grafham D."/>
            <person name="Skuce C."/>
            <person name="Pandian R."/>
            <person name="Andrews R."/>
            <person name="Harrison E."/>
            <person name="Kimberley A."/>
            <person name="Garnett J."/>
            <person name="Fosker N."/>
            <person name="Hall R."/>
            <person name="Garner P."/>
            <person name="Kelly D."/>
            <person name="Bird C."/>
            <person name="Palmer S."/>
            <person name="Gehring I."/>
            <person name="Berger A."/>
            <person name="Dooley C.M."/>
            <person name="Ersan-Urun Z."/>
            <person name="Eser C."/>
            <person name="Geiger H."/>
            <person name="Geisler M."/>
            <person name="Karotki L."/>
            <person name="Kirn A."/>
            <person name="Konantz J."/>
            <person name="Konantz M."/>
            <person name="Oberlander M."/>
            <person name="Rudolph-Geiger S."/>
            <person name="Teucke M."/>
            <person name="Lanz C."/>
            <person name="Raddatz G."/>
            <person name="Osoegawa K."/>
            <person name="Zhu B."/>
            <person name="Rapp A."/>
            <person name="Widaa S."/>
            <person name="Langford C."/>
            <person name="Yang F."/>
            <person name="Schuster S.C."/>
            <person name="Carter N.P."/>
            <person name="Harrow J."/>
            <person name="Ning Z."/>
            <person name="Herrero J."/>
            <person name="Searle S.M."/>
            <person name="Enright A."/>
            <person name="Geisler R."/>
            <person name="Plasterk R.H."/>
            <person name="Lee C."/>
            <person name="Westerfield M."/>
            <person name="de Jong P.J."/>
            <person name="Zon L.I."/>
            <person name="Postlethwait J.H."/>
            <person name="Nusslein-Volhard C."/>
            <person name="Hubbard T.J."/>
            <person name="Roest Crollius H."/>
            <person name="Rogers J."/>
            <person name="Stemple D.L."/>
        </authorList>
    </citation>
    <scope>NUCLEOTIDE SEQUENCE [LARGE SCALE GENOMIC DNA]</scope>
    <source>
        <strain>Tuebingen</strain>
    </source>
</reference>
<reference key="3">
    <citation type="submission" date="2003-07" db="EMBL/GenBank/DDBJ databases">
        <authorList>
            <consortium name="NIH - Zebrafish Gene Collection (ZGC) project"/>
        </authorList>
    </citation>
    <scope>NUCLEOTIDE SEQUENCE [LARGE SCALE MRNA]</scope>
    <source>
        <tissue>Kidney</tissue>
    </source>
</reference>
<sequence>MELRVGNRYRLGRKIGSGSFGDIYLGTDITTGEEVAIKLECVKTKHPQLHIESKIYKMMQGGVGIPTIKWCGAEGDYNVMVMELLGPSLEDLFNFCSRKFSLKTVLLLADQMISRIEYIHSKNFIHRDVKPDNFLMGLGKKGNLVYIIDFGLAKKYRDARTHQHIPYRENKNLTGTARYASINTHLGIEQSRRDDLESLGYVLMYFNLGSLPWQGLKAATKRQKYERISEKKMSTPIEVLCKGYPSEFATYLNFCRSLRFDDKPDYSYLRQLFRNLFHRQGFSYDYVFDWNMLKFGGAREDPERDRRDREERIRQGRIPLPRVMLPTSSGRPRGTQEVAPAPPLTPDSHTGMERERKVSMRLHRGAPVNVSSSDLTGRQDCSRISTSQAHSRVPSGLQSAVPR</sequence>
<feature type="chain" id="PRO_0000354087" description="Casein kinase I isoform delta-A">
    <location>
        <begin position="1"/>
        <end position="403"/>
    </location>
</feature>
<feature type="domain" description="Protein kinase" evidence="2">
    <location>
        <begin position="9"/>
        <end position="277"/>
    </location>
</feature>
<feature type="region of interest" description="Autoinhibitory" evidence="1">
    <location>
        <begin position="315"/>
        <end position="340"/>
    </location>
</feature>
<feature type="region of interest" description="Disordered" evidence="4">
    <location>
        <begin position="322"/>
        <end position="403"/>
    </location>
</feature>
<feature type="active site" description="Proton acceptor" evidence="2 3">
    <location>
        <position position="128"/>
    </location>
</feature>
<feature type="binding site" evidence="2">
    <location>
        <begin position="15"/>
        <end position="23"/>
    </location>
    <ligand>
        <name>ATP</name>
        <dbReference type="ChEBI" id="CHEBI:30616"/>
    </ligand>
</feature>
<feature type="binding site" evidence="2">
    <location>
        <position position="38"/>
    </location>
    <ligand>
        <name>ATP</name>
        <dbReference type="ChEBI" id="CHEBI:30616"/>
    </ligand>
</feature>
<accession>Q7T2E3</accession>